<organismHost>
    <name type="scientific">Homo sapiens</name>
    <name type="common">Human</name>
    <dbReference type="NCBI Taxonomy" id="9606"/>
</organismHost>
<keyword id="KW-0167">Capsid protein</keyword>
<keyword id="KW-1176">Cytoplasmic inwards viral transport</keyword>
<keyword id="KW-1048">Host nucleus</keyword>
<keyword id="KW-0945">Host-virus interaction</keyword>
<keyword id="KW-0426">Late protein</keyword>
<keyword id="KW-1177">Microtubular inwards viral transport</keyword>
<keyword id="KW-1148">T=25 icosahedral capsid protein</keyword>
<keyword id="KW-0946">Virion</keyword>
<keyword id="KW-1160">Virus entry into host cell</keyword>
<dbReference type="EMBL" id="X74663">
    <property type="protein sequence ID" value="CAA52727.1"/>
    <property type="molecule type" value="Genomic_DNA"/>
</dbReference>
<dbReference type="PIR" id="S37219">
    <property type="entry name" value="S37219"/>
</dbReference>
<dbReference type="SMR" id="P36852"/>
<dbReference type="GO" id="GO:0043657">
    <property type="term" value="C:host cell"/>
    <property type="evidence" value="ECO:0007669"/>
    <property type="project" value="GOC"/>
</dbReference>
<dbReference type="GO" id="GO:0042025">
    <property type="term" value="C:host cell nucleus"/>
    <property type="evidence" value="ECO:0007669"/>
    <property type="project" value="UniProtKB-SubCell"/>
</dbReference>
<dbReference type="GO" id="GO:0039623">
    <property type="term" value="C:T=25 icosahedral viral capsid"/>
    <property type="evidence" value="ECO:0007669"/>
    <property type="project" value="UniProtKB-KW"/>
</dbReference>
<dbReference type="GO" id="GO:0075521">
    <property type="term" value="P:microtubule-dependent intracellular transport of viral material towards nucleus"/>
    <property type="evidence" value="ECO:0007669"/>
    <property type="project" value="UniProtKB-KW"/>
</dbReference>
<dbReference type="GO" id="GO:0046718">
    <property type="term" value="P:symbiont entry into host cell"/>
    <property type="evidence" value="ECO:0007669"/>
    <property type="project" value="UniProtKB-KW"/>
</dbReference>
<dbReference type="Gene3D" id="2.170.9.10">
    <property type="entry name" value="Adenovirus Type 2 Hexon, domain 1"/>
    <property type="match status" value="1"/>
</dbReference>
<dbReference type="Gene3D" id="3.90.249.10">
    <property type="entry name" value="Hexon Major Viral Coat Protein, domain 3"/>
    <property type="match status" value="1"/>
</dbReference>
<dbReference type="InterPro" id="IPR016107">
    <property type="entry name" value="Adenovirus_Pll_hexon_N"/>
</dbReference>
<dbReference type="InterPro" id="IPR016110">
    <property type="entry name" value="Adenovirus_Pll_hexon_sub3"/>
</dbReference>
<dbReference type="InterPro" id="IPR016112">
    <property type="entry name" value="VP_dsDNA_II"/>
</dbReference>
<dbReference type="Pfam" id="PF01065">
    <property type="entry name" value="Adeno_hexon"/>
    <property type="match status" value="2"/>
</dbReference>
<dbReference type="SUPFAM" id="SSF49749">
    <property type="entry name" value="Group II dsDNA viruses VP"/>
    <property type="match status" value="1"/>
</dbReference>
<feature type="chain" id="PRO_0000221819" description="Hexon protein">
    <location>
        <begin position="1" status="less than"/>
        <end position="517" status="greater than"/>
    </location>
</feature>
<feature type="region of interest" description="Disordered" evidence="2">
    <location>
        <begin position="1"/>
        <end position="48"/>
    </location>
</feature>
<feature type="non-terminal residue">
    <location>
        <position position="1"/>
    </location>
</feature>
<feature type="non-terminal residue">
    <location>
        <position position="517"/>
    </location>
</feature>
<reference key="1">
    <citation type="journal article" date="1994" name="Res. Virol.">
        <title>Type- and group-specific polymerase chain reaction for adenovirus detection.</title>
        <authorList>
            <person name="Pring-Akerblom P."/>
            <person name="Adrian T."/>
        </authorList>
    </citation>
    <scope>NUCLEOTIDE SEQUENCE [GENOMIC DNA]</scope>
    <source>
        <strain>Isolate 1127</strain>
    </source>
</reference>
<protein>
    <recommendedName>
        <fullName>Hexon protein</fullName>
        <shortName>CP-H</shortName>
    </recommendedName>
    <alternativeName>
        <fullName>Protein II</fullName>
    </alternativeName>
</protein>
<accession>P36852</accession>
<sequence>FDIRGVLDRGPSFKPYSGTAYNSLAPKGAPNPSQWEQAKTGRGVDQNQKETRTYGVAHWRYNITKTGAGVDQNQKETRTYGEPTGDITLQKKAKEGLQIGIDETKEDQTTKFMQIKTFQPEPQIGENNWQDTNVFYGGRALKKETKMKPCYGSFARPTNKKGGQAKVLTTEDGQPTENFDIDLAFFDIPQAGGNGNLDPDMILYAENVNLETPDTHVVYKPGKDDASSAANLTQQSMPNRPNYIGFRDNFVGLMYYNSTGNMGVLAGQASQLNAVVDLQDRNTELSYQLLLDSLGDRTRYFSMWNSAVDSYDPDVRIIENHGVEDELPNYCFPLDGTGTNATYQGVEPDNAQGQNDKWKKDEKVAAQNQICKGNIYAMEINLQANLWKSFLYSNVALYLPDSFKYTPANVTLPTNTNTYEYMNGRVAAPSLVDAYVNIGARWSLDPMDNVNPFNHHRNAGLRYRSMLLGNGRYVPFHIQVPQKFFAIKNLLLLPGSYTYEWNFRKDVNMILQSSLGN</sequence>
<organism>
    <name type="scientific">Human adenovirus D serotype 8</name>
    <name type="common">HAdV-8</name>
    <name type="synonym">Human adenovirus 8</name>
    <dbReference type="NCBI Taxonomy" id="31545"/>
    <lineage>
        <taxon>Viruses</taxon>
        <taxon>Varidnaviria</taxon>
        <taxon>Bamfordvirae</taxon>
        <taxon>Preplasmiviricota</taxon>
        <taxon>Tectiliviricetes</taxon>
        <taxon>Rowavirales</taxon>
        <taxon>Adenoviridae</taxon>
        <taxon>Mastadenovirus</taxon>
        <taxon>Human mastadenovirus D</taxon>
    </lineage>
</organism>
<proteinExistence type="evidence at transcript level"/>
<evidence type="ECO:0000250" key="1"/>
<evidence type="ECO:0000256" key="2">
    <source>
        <dbReference type="SAM" id="MobiDB-lite"/>
    </source>
</evidence>
<evidence type="ECO:0000305" key="3"/>
<name>CAPSH_ADE08</name>
<comment type="function">
    <text evidence="1">Major capsid protein that self-associates to form 240 hexon trimers, each in the shape of a hexagon, building most of the pseudo T=25 capsid. Assembled into trimeric units with the help of the chaperone shutoff protein. Transported by pre-protein VI to the nucleus where it associates with other structural proteins to form an empty capsid. Might be involved, through its interaction with host dyneins, in the intracellular microtubule-dependent transport of incoming viral capsid to the nucleus (By similarity).</text>
</comment>
<comment type="subunit">
    <text evidence="1">Homotrimer (By similarity). Interacts with the capsid vertex protein; this interaction binds the peripentonal hexons to the neighboring penton base. Interacts with the hexon-linking protein; this interaction tethers the hexons surrounding the penton to those situated in the central plate of the facet. Interacts with the hexon-interlacing protein; this interaction lashes the hexons together. Interacts with host dyneins DYNC1LI1 and DYNC1I2; this interaction might be involved in intracellular microtubule-dependent transport of incoming viral capsid. Interacts with the shutoff protein; this interaction allows folding and formation of hexons trimers. Interacts with pre-protein VI; this interaction probably allows nuclear import of hexon trimers and possibly pre-capsid assembly (By similarity).</text>
</comment>
<comment type="subcellular location">
    <subcellularLocation>
        <location evidence="1">Virion</location>
    </subcellularLocation>
    <subcellularLocation>
        <location evidence="1">Host nucleus</location>
    </subcellularLocation>
    <text evidence="1">Forms the capsid icosahedric shell. Present in 720 copies per virion, assembled in 240 trimers (By similarity).</text>
</comment>
<comment type="induction">
    <text>Expressed in the late phase of the viral replicative cycle.</text>
</comment>
<comment type="miscellaneous">
    <text evidence="1">All late proteins expressed from the major late promoter are produced by alternative splicing and alternative polyadenylation of the same gene giving rise to non-overlapping ORFs. A leader sequence is present in the N-terminus of all these mRNAs and is recognized by the viral shutoff protein to provide expression although conventional translation via ribosome scanning from the cap has been shut off in the host cell (By similarity).</text>
</comment>
<comment type="similarity">
    <text evidence="3">Belongs to the adenoviridae hexon protein family.</text>
</comment>
<gene>
    <name type="ORF">L3</name>
</gene>